<keyword id="KW-0030">Aminoacyl-tRNA synthetase</keyword>
<keyword id="KW-0067">ATP-binding</keyword>
<keyword id="KW-0963">Cytoplasm</keyword>
<keyword id="KW-0436">Ligase</keyword>
<keyword id="KW-0460">Magnesium</keyword>
<keyword id="KW-0479">Metal-binding</keyword>
<keyword id="KW-0547">Nucleotide-binding</keyword>
<keyword id="KW-0648">Protein biosynthesis</keyword>
<proteinExistence type="inferred from homology"/>
<reference key="1">
    <citation type="journal article" date="2009" name="Stand. Genomic Sci.">
        <title>Complete genome sequence of Methanoculleus marisnigri Romesser et al. 1981 type strain JR1.</title>
        <authorList>
            <person name="Anderson I.J."/>
            <person name="Sieprawska-Lupa M."/>
            <person name="Lapidus A."/>
            <person name="Nolan M."/>
            <person name="Copeland A."/>
            <person name="Glavina Del Rio T."/>
            <person name="Tice H."/>
            <person name="Dalin E."/>
            <person name="Barry K."/>
            <person name="Saunders E."/>
            <person name="Han C."/>
            <person name="Brettin T."/>
            <person name="Detter J.C."/>
            <person name="Bruce D."/>
            <person name="Mikhailova N."/>
            <person name="Pitluck S."/>
            <person name="Hauser L."/>
            <person name="Land M."/>
            <person name="Lucas S."/>
            <person name="Richardson P."/>
            <person name="Whitman W.B."/>
            <person name="Kyrpides N.C."/>
        </authorList>
    </citation>
    <scope>NUCLEOTIDE SEQUENCE [LARGE SCALE GENOMIC DNA]</scope>
    <source>
        <strain>ATCC 35101 / DSM 1498 / JR1</strain>
    </source>
</reference>
<name>SYFA_METMJ</name>
<protein>
    <recommendedName>
        <fullName evidence="1">Phenylalanine--tRNA ligase alpha subunit</fullName>
        <ecNumber evidence="1">6.1.1.20</ecNumber>
    </recommendedName>
    <alternativeName>
        <fullName evidence="1">Phenylalanyl-tRNA synthetase alpha subunit</fullName>
        <shortName evidence="1">PheRS</shortName>
    </alternativeName>
</protein>
<sequence>MELTLNEKRLLVALGPMGSADAAVLAEKMDTRREAVVQYANLAGDRGLVDVEKHVARRYVPTEEGRAYMGKGLPERQVLESFEESIPMRDLQGHPLAKIAIGWMRKKGWIAITGGVVQKTGKTAPGPDEAAFVRLAEKGEIADGEGVADLAKRGLAIEEETVAYTVSITPRGRELLSQGLDLREEAGTLTREQILSGEWKSLPLRRYDVTKLPKRAYPGKVHPYQRIIDEMRRILFDMGFEEMSGGIVQSSFWNFDALFQPQDHPAREMQDTFFLGERRPLPAGYERVRDMHEHGGETSSTGWGGTWSAEKAEQCVLRTHTTSLSIQHLAAHPKPPVKAFCIGRVYRREAIDPTHLAEFEQLEGIVMDEDVNLRHLLGFLKEFYAKMGFEKVRFRPGYFPYTEPSVEPEVYVDGLGWVELGGSGIFRQEVTAPFGIEHPVLAWGLGISRVAMLRLGLRDLRHLYRSDIEWIRETPVYGGRR</sequence>
<organism>
    <name type="scientific">Methanoculleus marisnigri (strain ATCC 35101 / DSM 1498 / JR1)</name>
    <dbReference type="NCBI Taxonomy" id="368407"/>
    <lineage>
        <taxon>Archaea</taxon>
        <taxon>Methanobacteriati</taxon>
        <taxon>Methanobacteriota</taxon>
        <taxon>Stenosarchaea group</taxon>
        <taxon>Methanomicrobia</taxon>
        <taxon>Methanomicrobiales</taxon>
        <taxon>Methanomicrobiaceae</taxon>
        <taxon>Methanoculleus</taxon>
    </lineage>
</organism>
<comment type="catalytic activity">
    <reaction evidence="1">
        <text>tRNA(Phe) + L-phenylalanine + ATP = L-phenylalanyl-tRNA(Phe) + AMP + diphosphate + H(+)</text>
        <dbReference type="Rhea" id="RHEA:19413"/>
        <dbReference type="Rhea" id="RHEA-COMP:9668"/>
        <dbReference type="Rhea" id="RHEA-COMP:9699"/>
        <dbReference type="ChEBI" id="CHEBI:15378"/>
        <dbReference type="ChEBI" id="CHEBI:30616"/>
        <dbReference type="ChEBI" id="CHEBI:33019"/>
        <dbReference type="ChEBI" id="CHEBI:58095"/>
        <dbReference type="ChEBI" id="CHEBI:78442"/>
        <dbReference type="ChEBI" id="CHEBI:78531"/>
        <dbReference type="ChEBI" id="CHEBI:456215"/>
        <dbReference type="EC" id="6.1.1.20"/>
    </reaction>
</comment>
<comment type="cofactor">
    <cofactor evidence="1">
        <name>Mg(2+)</name>
        <dbReference type="ChEBI" id="CHEBI:18420"/>
    </cofactor>
    <text evidence="1">Binds 2 magnesium ions per tetramer.</text>
</comment>
<comment type="subunit">
    <text evidence="1">Tetramer of two alpha and two beta subunits.</text>
</comment>
<comment type="subcellular location">
    <subcellularLocation>
        <location evidence="1">Cytoplasm</location>
    </subcellularLocation>
</comment>
<comment type="similarity">
    <text evidence="1">Belongs to the class-II aminoacyl-tRNA synthetase family. Phe-tRNA synthetase alpha subunit type 2 subfamily.</text>
</comment>
<gene>
    <name evidence="1" type="primary">pheS</name>
    <name type="ordered locus">Memar_0643</name>
</gene>
<evidence type="ECO:0000255" key="1">
    <source>
        <dbReference type="HAMAP-Rule" id="MF_00282"/>
    </source>
</evidence>
<dbReference type="EC" id="6.1.1.20" evidence="1"/>
<dbReference type="EMBL" id="CP000562">
    <property type="protein sequence ID" value="ABN56576.1"/>
    <property type="molecule type" value="Genomic_DNA"/>
</dbReference>
<dbReference type="RefSeq" id="WP_011843487.1">
    <property type="nucleotide sequence ID" value="NC_009051.1"/>
</dbReference>
<dbReference type="SMR" id="A3CT76"/>
<dbReference type="STRING" id="368407.Memar_0643"/>
<dbReference type="GeneID" id="4846063"/>
<dbReference type="KEGG" id="mem:Memar_0643"/>
<dbReference type="eggNOG" id="arCOG00410">
    <property type="taxonomic scope" value="Archaea"/>
</dbReference>
<dbReference type="HOGENOM" id="CLU_025086_2_2_2"/>
<dbReference type="OrthoDB" id="372178at2157"/>
<dbReference type="Proteomes" id="UP000002146">
    <property type="component" value="Chromosome"/>
</dbReference>
<dbReference type="GO" id="GO:0005737">
    <property type="term" value="C:cytoplasm"/>
    <property type="evidence" value="ECO:0007669"/>
    <property type="project" value="UniProtKB-SubCell"/>
</dbReference>
<dbReference type="GO" id="GO:0005524">
    <property type="term" value="F:ATP binding"/>
    <property type="evidence" value="ECO:0007669"/>
    <property type="project" value="UniProtKB-UniRule"/>
</dbReference>
<dbReference type="GO" id="GO:0000287">
    <property type="term" value="F:magnesium ion binding"/>
    <property type="evidence" value="ECO:0007669"/>
    <property type="project" value="UniProtKB-UniRule"/>
</dbReference>
<dbReference type="GO" id="GO:0004826">
    <property type="term" value="F:phenylalanine-tRNA ligase activity"/>
    <property type="evidence" value="ECO:0007669"/>
    <property type="project" value="UniProtKB-UniRule"/>
</dbReference>
<dbReference type="GO" id="GO:0000049">
    <property type="term" value="F:tRNA binding"/>
    <property type="evidence" value="ECO:0007669"/>
    <property type="project" value="InterPro"/>
</dbReference>
<dbReference type="GO" id="GO:0006432">
    <property type="term" value="P:phenylalanyl-tRNA aminoacylation"/>
    <property type="evidence" value="ECO:0007669"/>
    <property type="project" value="UniProtKB-UniRule"/>
</dbReference>
<dbReference type="CDD" id="cd00496">
    <property type="entry name" value="PheRS_alpha_core"/>
    <property type="match status" value="1"/>
</dbReference>
<dbReference type="FunFam" id="3.30.930.10:FF:000095">
    <property type="entry name" value="Phenylalanine--tRNA ligase alpha subunit"/>
    <property type="match status" value="1"/>
</dbReference>
<dbReference type="Gene3D" id="1.10.10.2320">
    <property type="match status" value="1"/>
</dbReference>
<dbReference type="Gene3D" id="1.10.10.2330">
    <property type="match status" value="1"/>
</dbReference>
<dbReference type="Gene3D" id="3.30.1370.240">
    <property type="match status" value="1"/>
</dbReference>
<dbReference type="Gene3D" id="3.30.930.10">
    <property type="entry name" value="Bira Bifunctional Protein, Domain 2"/>
    <property type="match status" value="1"/>
</dbReference>
<dbReference type="HAMAP" id="MF_00282">
    <property type="entry name" value="Phe_tRNA_synth_alpha2"/>
    <property type="match status" value="1"/>
</dbReference>
<dbReference type="InterPro" id="IPR006195">
    <property type="entry name" value="aa-tRNA-synth_II"/>
</dbReference>
<dbReference type="InterPro" id="IPR045864">
    <property type="entry name" value="aa-tRNA-synth_II/BPL/LPL"/>
</dbReference>
<dbReference type="InterPro" id="IPR004529">
    <property type="entry name" value="Phe-tRNA-synth_IIc_asu"/>
</dbReference>
<dbReference type="InterPro" id="IPR022917">
    <property type="entry name" value="Phe_tRNA_ligase_alpha_bac/arc"/>
</dbReference>
<dbReference type="InterPro" id="IPR002319">
    <property type="entry name" value="Phenylalanyl-tRNA_Synthase"/>
</dbReference>
<dbReference type="NCBIfam" id="TIGR00468">
    <property type="entry name" value="pheS"/>
    <property type="match status" value="1"/>
</dbReference>
<dbReference type="NCBIfam" id="NF003210">
    <property type="entry name" value="PRK04172.1"/>
    <property type="match status" value="1"/>
</dbReference>
<dbReference type="PANTHER" id="PTHR11538:SF40">
    <property type="entry name" value="PHENYLALANINE--TRNA LIGASE ALPHA SUBUNIT"/>
    <property type="match status" value="1"/>
</dbReference>
<dbReference type="PANTHER" id="PTHR11538">
    <property type="entry name" value="PHENYLALANYL-TRNA SYNTHETASE"/>
    <property type="match status" value="1"/>
</dbReference>
<dbReference type="Pfam" id="PF01409">
    <property type="entry name" value="tRNA-synt_2d"/>
    <property type="match status" value="1"/>
</dbReference>
<dbReference type="SUPFAM" id="SSF55681">
    <property type="entry name" value="Class II aaRS and biotin synthetases"/>
    <property type="match status" value="1"/>
</dbReference>
<dbReference type="PROSITE" id="PS50862">
    <property type="entry name" value="AA_TRNA_LIGASE_II"/>
    <property type="match status" value="1"/>
</dbReference>
<feature type="chain" id="PRO_1000007664" description="Phenylalanine--tRNA ligase alpha subunit">
    <location>
        <begin position="1"/>
        <end position="481"/>
    </location>
</feature>
<feature type="binding site" evidence="1">
    <location>
        <position position="322"/>
    </location>
    <ligand>
        <name>L-phenylalanine</name>
        <dbReference type="ChEBI" id="CHEBI:58095"/>
    </ligand>
</feature>
<feature type="binding site" evidence="1">
    <location>
        <begin position="361"/>
        <end position="363"/>
    </location>
    <ligand>
        <name>L-phenylalanine</name>
        <dbReference type="ChEBI" id="CHEBI:58095"/>
    </ligand>
</feature>
<feature type="binding site" evidence="1">
    <location>
        <position position="401"/>
    </location>
    <ligand>
        <name>L-phenylalanine</name>
        <dbReference type="ChEBI" id="CHEBI:58095"/>
    </ligand>
</feature>
<feature type="binding site" evidence="1">
    <location>
        <position position="403"/>
    </location>
    <ligand>
        <name>Mg(2+)</name>
        <dbReference type="ChEBI" id="CHEBI:18420"/>
        <note>shared with beta subunit</note>
    </ligand>
</feature>
<feature type="binding site" evidence="1">
    <location>
        <position position="426"/>
    </location>
    <ligand>
        <name>L-phenylalanine</name>
        <dbReference type="ChEBI" id="CHEBI:58095"/>
    </ligand>
</feature>
<accession>A3CT76</accession>